<reference key="1">
    <citation type="journal article" date="2011" name="J. Bacteriol.">
        <title>Genome sequence of the vertebrate gut symbiont Lactobacillus reuteri ATCC 53608.</title>
        <authorList>
            <person name="Heavens D."/>
            <person name="Tailford L.E."/>
            <person name="Crossman L."/>
            <person name="Jeffers F."/>
            <person name="Mackenzie D.A."/>
            <person name="Caccamo M."/>
            <person name="Juge N."/>
        </authorList>
    </citation>
    <scope>NUCLEOTIDE SEQUENCE [LARGE SCALE GENOMIC DNA]</scope>
    <source>
        <strain>ATCC 53608 / LMG 31752 / 1063</strain>
    </source>
</reference>
<reference key="2">
    <citation type="journal article" date="2019" name="Glycobiology">
        <title>Serine-rich repeat protein adhesins from Lactobacillus reuteri display strain specific glycosylation profiles.</title>
        <authorList>
            <person name="Latousakis D."/>
            <person name="Nepravishta R."/>
            <person name="Rejzek M."/>
            <person name="Wegmann U."/>
            <person name="Le Gall G."/>
            <person name="Kavanaugh D."/>
            <person name="Colquhoun I.J."/>
            <person name="Frese S."/>
            <person name="MacKenzie D.A."/>
            <person name="Walter J."/>
            <person name="Angulo J."/>
            <person name="Field R.A."/>
            <person name="Juge N."/>
        </authorList>
    </citation>
    <scope>FUNCTION</scope>
    <scope>IDENTIFICATION OF CARBOHYDRATE ALPHA LINKAGE</scope>
    <scope>PATHWAY</scope>
    <source>
        <strain>ATCC 53608 / LMG 31752 / 1063</strain>
    </source>
</reference>
<sequence>MTVYNINLGIGWASSGVEYAQSYRAQAFRNLNISAKFVFSDLILGNNIADLTANLGFNADQIIWLYNFFTDIKIAPSTFLLDTFVEQNHLEQRNFSLLPNNGTKELQYKSEEEKLTIVPRYNNREKQTIDQVTYIFNNRLIKRDFYSYTKYATEYYSGEEKDNQVIFREFYNENGTIAYTQHLDGDGHELFEFPDQNYYSKTDLYREMLRKFNFKADDIIILDRMDEDKQLVNGQLIFEHHLPAKLVIPVHADHYDKHYTNDHQVLWNNFYEYQFMHYQDVAAYVVATDRQRDLLASQQKHFNHAKPQINTIPVGSLEHLVKPKGTRKKHSLITASRLANEKHIDWVIEATVAAHKIVSDLTLDIYGEGGERSRLQNLITKNNADSYIKLMGQHDLKDVYQKYETYIAGSTSEGFGLSLMEAVGSGLSMIGFDVPYGNQTFIVDQQNGYLLPYTEDWSNSRKEQLLADAIVKNFTEADLTSFHEKSYSLAESYLTKNVAKQWQQLIGELQHA</sequence>
<organism>
    <name type="scientific">Limosilactobacillus reuteri subsp. suis (strain ATCC 53608 / LMG 31752 / 1063)</name>
    <name type="common">Lactobacillus reuteri</name>
    <dbReference type="NCBI Taxonomy" id="927703"/>
    <lineage>
        <taxon>Bacteria</taxon>
        <taxon>Bacillati</taxon>
        <taxon>Bacillota</taxon>
        <taxon>Bacilli</taxon>
        <taxon>Lactobacillales</taxon>
        <taxon>Lactobacillaceae</taxon>
        <taxon>Limosilactobacillus</taxon>
    </lineage>
</organism>
<evidence type="ECO:0000250" key="1">
    <source>
        <dbReference type="UniProtKB" id="A0A0H2URG7"/>
    </source>
</evidence>
<evidence type="ECO:0000255" key="2">
    <source>
        <dbReference type="HAMAP-Rule" id="MF_01472"/>
    </source>
</evidence>
<evidence type="ECO:0000269" key="3">
    <source>
    </source>
</evidence>
<evidence type="ECO:0000303" key="4">
    <source>
    </source>
</evidence>
<evidence type="ECO:0000305" key="5">
    <source>
    </source>
</evidence>
<comment type="function">
    <text evidence="3 5">Required for polymorphic O-glycosylation of the serine-rich repeat protein (SRRP) in this bacteria. Catalyzes the first step in glycosylation by transferring N-acetylglucosamine from UDP-GlcNAc to serine residues in the substrate protein. Part of the accessory SecA2/SecY2 system specifically required to export serine-rich repeat cell wall proteins encoded in the same operon. The GtfA-GtfB complex adds GlcNAc from UDP-GlcNAc to SRRP (experimentally characterized with a truncated SSR1 construct); the alpha linkage was shown for this enzyme but not the residues glycosylated on SRRP.</text>
</comment>
<comment type="catalytic activity">
    <reaction evidence="1 2 5">
        <text>L-seryl-[protein] + UDP-N-acetyl-alpha-D-glucosamine = 3-O-[N-acetyl-alpha-D-glucosaminyl]-L-seryl-[protein] + UDP + H(+)</text>
        <dbReference type="Rhea" id="RHEA:59872"/>
        <dbReference type="Rhea" id="RHEA-COMP:9863"/>
        <dbReference type="Rhea" id="RHEA-COMP:15471"/>
        <dbReference type="ChEBI" id="CHEBI:15378"/>
        <dbReference type="ChEBI" id="CHEBI:29999"/>
        <dbReference type="ChEBI" id="CHEBI:57705"/>
        <dbReference type="ChEBI" id="CHEBI:58223"/>
        <dbReference type="ChEBI" id="CHEBI:143279"/>
    </reaction>
</comment>
<comment type="pathway">
    <text evidence="2 3">Protein modification; protein glycosylation.</text>
</comment>
<comment type="subunit">
    <text evidence="2 5">Forms a heterotetramer with 2 subunits each of GtfA and GtfB. Part of the accessory SecA2/SecY2 protein translocation apparatus.</text>
</comment>
<comment type="subcellular location">
    <subcellularLocation>
        <location evidence="2">Cytoplasm</location>
    </subcellularLocation>
    <subcellularLocation>
        <location evidence="2">Cell membrane</location>
        <topology evidence="2">Peripheral membrane protein</topology>
    </subcellularLocation>
    <text evidence="2">Cell membrane association requires GtfB.</text>
</comment>
<comment type="similarity">
    <text evidence="2">Belongs to the glycosyltransferase group 1 family. Glycosyltransferase 4 subfamily.</text>
</comment>
<dbReference type="EC" id="2.4.1.-" evidence="2 3"/>
<dbReference type="EMBL" id="FR854365">
    <property type="protein sequence ID" value="CCC03850.1"/>
    <property type="molecule type" value="Genomic_DNA"/>
</dbReference>
<dbReference type="SMR" id="A0A0S4NM89"/>
<dbReference type="HOGENOM" id="CLU_009583_21_0_9"/>
<dbReference type="UniPathway" id="UPA00378"/>
<dbReference type="GO" id="GO:0005737">
    <property type="term" value="C:cytoplasm"/>
    <property type="evidence" value="ECO:0007669"/>
    <property type="project" value="UniProtKB-SubCell"/>
</dbReference>
<dbReference type="GO" id="GO:0005886">
    <property type="term" value="C:plasma membrane"/>
    <property type="evidence" value="ECO:0007669"/>
    <property type="project" value="UniProtKB-SubCell"/>
</dbReference>
<dbReference type="GO" id="GO:0017122">
    <property type="term" value="C:protein N-acetylglucosaminyltransferase complex"/>
    <property type="evidence" value="ECO:0007669"/>
    <property type="project" value="UniProtKB-UniRule"/>
</dbReference>
<dbReference type="GO" id="GO:0016757">
    <property type="term" value="F:glycosyltransferase activity"/>
    <property type="evidence" value="ECO:0007669"/>
    <property type="project" value="UniProtKB-UniRule"/>
</dbReference>
<dbReference type="GO" id="GO:0000166">
    <property type="term" value="F:nucleotide binding"/>
    <property type="evidence" value="ECO:0007669"/>
    <property type="project" value="UniProtKB-KW"/>
</dbReference>
<dbReference type="GO" id="GO:0018242">
    <property type="term" value="P:protein O-linked glycosylation via serine"/>
    <property type="evidence" value="ECO:0007669"/>
    <property type="project" value="UniProtKB-UniRule"/>
</dbReference>
<dbReference type="FunFam" id="3.40.50.2000:FF:000196">
    <property type="entry name" value="UDP-N-acetylglucosamine--peptide N-acetylglucosaminyltransferase GtfA subunit"/>
    <property type="match status" value="1"/>
</dbReference>
<dbReference type="Gene3D" id="3.40.50.2000">
    <property type="entry name" value="Glycogen Phosphorylase B"/>
    <property type="match status" value="2"/>
</dbReference>
<dbReference type="HAMAP" id="MF_01472">
    <property type="entry name" value="GtfA"/>
    <property type="match status" value="1"/>
</dbReference>
<dbReference type="InterPro" id="IPR014267">
    <property type="entry name" value="GtfA"/>
</dbReference>
<dbReference type="InterPro" id="IPR054396">
    <property type="entry name" value="GtfA_EBD"/>
</dbReference>
<dbReference type="NCBIfam" id="TIGR02918">
    <property type="entry name" value="accessory Sec system glycosyltransferase GtfA"/>
    <property type="match status" value="1"/>
</dbReference>
<dbReference type="PANTHER" id="PTHR12526">
    <property type="entry name" value="GLYCOSYLTRANSFERASE"/>
    <property type="match status" value="1"/>
</dbReference>
<dbReference type="PANTHER" id="PTHR12526:SF629">
    <property type="entry name" value="TEICHURONIC ACID BIOSYNTHESIS GLYCOSYLTRANSFERASE TUAH-RELATED"/>
    <property type="match status" value="1"/>
</dbReference>
<dbReference type="Pfam" id="PF13692">
    <property type="entry name" value="Glyco_trans_1_4"/>
    <property type="match status" value="1"/>
</dbReference>
<dbReference type="Pfam" id="PF22145">
    <property type="entry name" value="GtfA_EBD"/>
    <property type="match status" value="1"/>
</dbReference>
<dbReference type="SUPFAM" id="SSF53756">
    <property type="entry name" value="UDP-Glycosyltransferase/glycogen phosphorylase"/>
    <property type="match status" value="1"/>
</dbReference>
<keyword id="KW-1003">Cell membrane</keyword>
<keyword id="KW-0963">Cytoplasm</keyword>
<keyword id="KW-0328">Glycosyltransferase</keyword>
<keyword id="KW-0472">Membrane</keyword>
<keyword id="KW-0547">Nucleotide-binding</keyword>
<keyword id="KW-0808">Transferase</keyword>
<gene>
    <name evidence="2 4" type="primary">gtfA</name>
    <name type="ORF">LRATCC53608_1098</name>
</gene>
<name>GTFA_LIMR5</name>
<accession>A0A0S4NM89</accession>
<accession>F8KEI5</accession>
<protein>
    <recommendedName>
        <fullName evidence="2">UDP-N-acetylglucosamine--peptide N-acetylglucosaminyltransferase GtfA subunit</fullName>
        <ecNumber evidence="2 3">2.4.1.-</ecNumber>
    </recommendedName>
    <alternativeName>
        <fullName evidence="2 4">Glycosyltransferase GtfA</fullName>
    </alternativeName>
</protein>
<proteinExistence type="inferred from homology"/>
<feature type="chain" id="PRO_0000447248" description="UDP-N-acetylglucosamine--peptide N-acetylglucosaminyltransferase GtfA subunit">
    <location>
        <begin position="1"/>
        <end position="512"/>
    </location>
</feature>
<feature type="binding site" evidence="2">
    <location>
        <begin position="16"/>
        <end position="19"/>
    </location>
    <ligand>
        <name>UDP</name>
        <dbReference type="ChEBI" id="CHEBI:58223"/>
    </ligand>
</feature>
<feature type="binding site" evidence="2">
    <location>
        <position position="251"/>
    </location>
    <ligand>
        <name>N-acetyl-D-glucosamine</name>
        <dbReference type="ChEBI" id="CHEBI:506227"/>
    </ligand>
</feature>
<feature type="binding site" evidence="2">
    <location>
        <begin position="393"/>
        <end position="394"/>
    </location>
    <ligand>
        <name>UDP</name>
        <dbReference type="ChEBI" id="CHEBI:58223"/>
    </ligand>
</feature>
<feature type="binding site" evidence="2">
    <location>
        <begin position="413"/>
        <end position="416"/>
    </location>
    <ligand>
        <name>UDP</name>
        <dbReference type="ChEBI" id="CHEBI:58223"/>
    </ligand>
</feature>